<organism>
    <name type="scientific">Corynebacterium jeikeium (strain K411)</name>
    <dbReference type="NCBI Taxonomy" id="306537"/>
    <lineage>
        <taxon>Bacteria</taxon>
        <taxon>Bacillati</taxon>
        <taxon>Actinomycetota</taxon>
        <taxon>Actinomycetes</taxon>
        <taxon>Mycobacteriales</taxon>
        <taxon>Corynebacteriaceae</taxon>
        <taxon>Corynebacterium</taxon>
    </lineage>
</organism>
<gene>
    <name evidence="1" type="primary">pckG</name>
    <name type="synonym">pck</name>
    <name type="ordered locus">jk0151</name>
</gene>
<comment type="function">
    <text evidence="1">Catalyzes the conversion of oxaloacetate (OAA) to phosphoenolpyruvate (PEP), the rate-limiting step in the metabolic pathway that produces glucose from lactate and other precursors derived from the citric acid cycle.</text>
</comment>
<comment type="catalytic activity">
    <reaction evidence="1">
        <text>oxaloacetate + GTP = phosphoenolpyruvate + GDP + CO2</text>
        <dbReference type="Rhea" id="RHEA:10388"/>
        <dbReference type="ChEBI" id="CHEBI:16452"/>
        <dbReference type="ChEBI" id="CHEBI:16526"/>
        <dbReference type="ChEBI" id="CHEBI:37565"/>
        <dbReference type="ChEBI" id="CHEBI:58189"/>
        <dbReference type="ChEBI" id="CHEBI:58702"/>
        <dbReference type="EC" id="4.1.1.32"/>
    </reaction>
</comment>
<comment type="cofactor">
    <cofactor evidence="1">
        <name>Mn(2+)</name>
        <dbReference type="ChEBI" id="CHEBI:29035"/>
    </cofactor>
    <text evidence="1">Binds 1 Mn(2+) ion per subunit.</text>
</comment>
<comment type="pathway">
    <text evidence="1">Carbohydrate biosynthesis; gluconeogenesis.</text>
</comment>
<comment type="subunit">
    <text evidence="1">Monomer.</text>
</comment>
<comment type="subcellular location">
    <subcellularLocation>
        <location evidence="1">Cytoplasm</location>
    </subcellularLocation>
</comment>
<comment type="similarity">
    <text evidence="1">Belongs to the phosphoenolpyruvate carboxykinase [GTP] family.</text>
</comment>
<protein>
    <recommendedName>
        <fullName evidence="1">Phosphoenolpyruvate carboxykinase [GTP]</fullName>
        <shortName evidence="1">PEP carboxykinase</shortName>
        <shortName evidence="1">PEPCK</shortName>
        <ecNumber evidence="1">4.1.1.32</ecNumber>
    </recommendedName>
</protein>
<feature type="chain" id="PRO_0000103604" description="Phosphoenolpyruvate carboxykinase [GTP]">
    <location>
        <begin position="1"/>
        <end position="606"/>
    </location>
</feature>
<feature type="active site" evidence="1">
    <location>
        <position position="271"/>
    </location>
</feature>
<feature type="binding site" evidence="1">
    <location>
        <position position="79"/>
    </location>
    <ligand>
        <name>substrate</name>
    </ligand>
</feature>
<feature type="binding site" evidence="1">
    <location>
        <begin position="218"/>
        <end position="220"/>
    </location>
    <ligand>
        <name>substrate</name>
    </ligand>
</feature>
<feature type="binding site" evidence="1">
    <location>
        <position position="227"/>
    </location>
    <ligand>
        <name>Mn(2+)</name>
        <dbReference type="ChEBI" id="CHEBI:29035"/>
    </ligand>
</feature>
<feature type="binding site" evidence="1">
    <location>
        <position position="247"/>
    </location>
    <ligand>
        <name>Mn(2+)</name>
        <dbReference type="ChEBI" id="CHEBI:29035"/>
    </ligand>
</feature>
<feature type="binding site" evidence="1">
    <location>
        <position position="269"/>
    </location>
    <ligand>
        <name>substrate</name>
    </ligand>
</feature>
<feature type="binding site" evidence="1">
    <location>
        <begin position="270"/>
        <end position="275"/>
    </location>
    <ligand>
        <name>GTP</name>
        <dbReference type="ChEBI" id="CHEBI:37565"/>
    </ligand>
</feature>
<feature type="binding site" evidence="1">
    <location>
        <position position="294"/>
    </location>
    <ligand>
        <name>Mn(2+)</name>
        <dbReference type="ChEBI" id="CHEBI:29035"/>
    </ligand>
</feature>
<feature type="binding site" evidence="1">
    <location>
        <begin position="384"/>
        <end position="386"/>
    </location>
    <ligand>
        <name>substrate</name>
    </ligand>
</feature>
<feature type="binding site" evidence="1">
    <location>
        <position position="386"/>
    </location>
    <ligand>
        <name>GTP</name>
        <dbReference type="ChEBI" id="CHEBI:37565"/>
    </ligand>
</feature>
<feature type="binding site" evidence="1">
    <location>
        <position position="417"/>
    </location>
    <ligand>
        <name>GTP</name>
        <dbReference type="ChEBI" id="CHEBI:37565"/>
    </ligand>
</feature>
<feature type="binding site" evidence="1">
    <location>
        <begin position="512"/>
        <end position="515"/>
    </location>
    <ligand>
        <name>GTP</name>
        <dbReference type="ChEBI" id="CHEBI:37565"/>
    </ligand>
</feature>
<evidence type="ECO:0000255" key="1">
    <source>
        <dbReference type="HAMAP-Rule" id="MF_00452"/>
    </source>
</evidence>
<proteinExistence type="inferred from homology"/>
<reference key="1">
    <citation type="journal article" date="2005" name="J. Bacteriol.">
        <title>Complete genome sequence and analysis of the multiresistant nosocomial pathogen Corynebacterium jeikeium K411, a lipid-requiring bacterium of the human skin flora.</title>
        <authorList>
            <person name="Tauch A."/>
            <person name="Kaiser O."/>
            <person name="Hain T."/>
            <person name="Goesmann A."/>
            <person name="Weisshaar B."/>
            <person name="Albersmeier A."/>
            <person name="Bekel T."/>
            <person name="Bischoff N."/>
            <person name="Brune I."/>
            <person name="Chakraborty T."/>
            <person name="Kalinowski J."/>
            <person name="Meyer F."/>
            <person name="Rupp O."/>
            <person name="Schneiker S."/>
            <person name="Viehoever P."/>
            <person name="Puehler A."/>
        </authorList>
    </citation>
    <scope>NUCLEOTIDE SEQUENCE [LARGE SCALE GENOMIC DNA]</scope>
    <source>
        <strain>K411</strain>
    </source>
</reference>
<sequence length="606" mass="67733">MTIRGLVGEAPTKNQEMLNWIEEAVELFQPESVVFCDGSEEEWNELAEQLVEHGTLIKLDEEAQPNSFLARSNPSDVARVESRTFICSKTEEDAGPTNNWMDPEQMRAEMREHFSGSMKGRRMYIVPFCMGPITDPSPKLGIEITDSPYVVMSMRIMTRMGKEALDKIGENGEFVKGLHSVGAPLEPGQEDSTWPCNDTKYITHFPEDREIWSYGSGYGGNAILAKKCYALRIASAMARDEGWMAEHMLILKLISPEDKAYYICAAFPSACGKTNLAMIQPTIPGWRAEVVGDDIAWLHFGEDGRLYAVNPENGFFGVAPGTNYASNPMAMKSMEPGNTLYTNVALTDDNNVWWESKEGEPQHLIDWLGNEWTPDSGNKAAHPNSRYCVPIEQCPVAAPEFNDPKGVPVSAILFGGRRADTVPLVTQARDWNHATFIGATLASGQTAAAAEAAVGSLRHDPMAMLPFIGYNAGDYLQHWIDMGNKGGDKMPEVFLVNWFRRGEDGRFLWPGFGENSRVLKWIIDRIEGRVEADETVVGYTARYEDIYTDGLKETEEDIREALSVNPADWERDLADNEEWLKFLGPKVPSEVWDEFQGLKDRVEAAK</sequence>
<accession>Q4JY04</accession>
<keyword id="KW-0963">Cytoplasm</keyword>
<keyword id="KW-0210">Decarboxylase</keyword>
<keyword id="KW-0312">Gluconeogenesis</keyword>
<keyword id="KW-0342">GTP-binding</keyword>
<keyword id="KW-0456">Lyase</keyword>
<keyword id="KW-0464">Manganese</keyword>
<keyword id="KW-0479">Metal-binding</keyword>
<keyword id="KW-0547">Nucleotide-binding</keyword>
<keyword id="KW-1185">Reference proteome</keyword>
<name>PCKG_CORJK</name>
<dbReference type="EC" id="4.1.1.32" evidence="1"/>
<dbReference type="EMBL" id="CR931997">
    <property type="protein sequence ID" value="CAI36303.1"/>
    <property type="molecule type" value="Genomic_DNA"/>
</dbReference>
<dbReference type="RefSeq" id="WP_005297204.1">
    <property type="nucleotide sequence ID" value="NC_007164.1"/>
</dbReference>
<dbReference type="SMR" id="Q4JY04"/>
<dbReference type="STRING" id="306537.jk0151"/>
<dbReference type="GeneID" id="92737633"/>
<dbReference type="KEGG" id="cjk:jk0151"/>
<dbReference type="eggNOG" id="COG1274">
    <property type="taxonomic scope" value="Bacteria"/>
</dbReference>
<dbReference type="HOGENOM" id="CLU_028872_1_1_11"/>
<dbReference type="OrthoDB" id="9758871at2"/>
<dbReference type="UniPathway" id="UPA00138"/>
<dbReference type="Proteomes" id="UP000000545">
    <property type="component" value="Chromosome"/>
</dbReference>
<dbReference type="GO" id="GO:0005829">
    <property type="term" value="C:cytosol"/>
    <property type="evidence" value="ECO:0007669"/>
    <property type="project" value="TreeGrafter"/>
</dbReference>
<dbReference type="GO" id="GO:0005525">
    <property type="term" value="F:GTP binding"/>
    <property type="evidence" value="ECO:0007669"/>
    <property type="project" value="UniProtKB-UniRule"/>
</dbReference>
<dbReference type="GO" id="GO:0030145">
    <property type="term" value="F:manganese ion binding"/>
    <property type="evidence" value="ECO:0007669"/>
    <property type="project" value="UniProtKB-UniRule"/>
</dbReference>
<dbReference type="GO" id="GO:0004613">
    <property type="term" value="F:phosphoenolpyruvate carboxykinase (GTP) activity"/>
    <property type="evidence" value="ECO:0007669"/>
    <property type="project" value="UniProtKB-UniRule"/>
</dbReference>
<dbReference type="GO" id="GO:0071333">
    <property type="term" value="P:cellular response to glucose stimulus"/>
    <property type="evidence" value="ECO:0007669"/>
    <property type="project" value="TreeGrafter"/>
</dbReference>
<dbReference type="GO" id="GO:0006094">
    <property type="term" value="P:gluconeogenesis"/>
    <property type="evidence" value="ECO:0007669"/>
    <property type="project" value="UniProtKB-UniRule"/>
</dbReference>
<dbReference type="GO" id="GO:0046327">
    <property type="term" value="P:glycerol biosynthetic process from pyruvate"/>
    <property type="evidence" value="ECO:0007669"/>
    <property type="project" value="TreeGrafter"/>
</dbReference>
<dbReference type="GO" id="GO:0006107">
    <property type="term" value="P:oxaloacetate metabolic process"/>
    <property type="evidence" value="ECO:0007669"/>
    <property type="project" value="TreeGrafter"/>
</dbReference>
<dbReference type="GO" id="GO:0019543">
    <property type="term" value="P:propionate catabolic process"/>
    <property type="evidence" value="ECO:0007669"/>
    <property type="project" value="TreeGrafter"/>
</dbReference>
<dbReference type="GO" id="GO:0033993">
    <property type="term" value="P:response to lipid"/>
    <property type="evidence" value="ECO:0007669"/>
    <property type="project" value="TreeGrafter"/>
</dbReference>
<dbReference type="GO" id="GO:0042594">
    <property type="term" value="P:response to starvation"/>
    <property type="evidence" value="ECO:0007669"/>
    <property type="project" value="TreeGrafter"/>
</dbReference>
<dbReference type="CDD" id="cd00819">
    <property type="entry name" value="PEPCK_GTP"/>
    <property type="match status" value="1"/>
</dbReference>
<dbReference type="FunFam" id="3.40.449.10:FF:000005">
    <property type="entry name" value="Phosphoenolpyruvate carboxykinase [GTP]"/>
    <property type="match status" value="1"/>
</dbReference>
<dbReference type="Gene3D" id="3.90.228.20">
    <property type="match status" value="1"/>
</dbReference>
<dbReference type="Gene3D" id="3.40.449.10">
    <property type="entry name" value="Phosphoenolpyruvate Carboxykinase, domain 1"/>
    <property type="match status" value="1"/>
</dbReference>
<dbReference type="Gene3D" id="2.170.8.10">
    <property type="entry name" value="Phosphoenolpyruvate Carboxykinase, domain 2"/>
    <property type="match status" value="1"/>
</dbReference>
<dbReference type="HAMAP" id="MF_00452">
    <property type="entry name" value="PEPCK_GTP"/>
    <property type="match status" value="1"/>
</dbReference>
<dbReference type="InterPro" id="IPR018091">
    <property type="entry name" value="PEP_carboxykin_GTP_CS"/>
</dbReference>
<dbReference type="InterPro" id="IPR013035">
    <property type="entry name" value="PEP_carboxykinase_C"/>
</dbReference>
<dbReference type="InterPro" id="IPR008209">
    <property type="entry name" value="PEP_carboxykinase_GTP"/>
</dbReference>
<dbReference type="InterPro" id="IPR035077">
    <property type="entry name" value="PEP_carboxykinase_GTP_C"/>
</dbReference>
<dbReference type="InterPro" id="IPR035078">
    <property type="entry name" value="PEP_carboxykinase_GTP_N"/>
</dbReference>
<dbReference type="InterPro" id="IPR008210">
    <property type="entry name" value="PEP_carboxykinase_N"/>
</dbReference>
<dbReference type="NCBIfam" id="NF003253">
    <property type="entry name" value="PRK04210.1"/>
    <property type="match status" value="1"/>
</dbReference>
<dbReference type="PANTHER" id="PTHR11561">
    <property type="entry name" value="PHOSPHOENOLPYRUVATE CARBOXYKINASE"/>
    <property type="match status" value="1"/>
</dbReference>
<dbReference type="PANTHER" id="PTHR11561:SF0">
    <property type="entry name" value="PHOSPHOENOLPYRUVATE CARBOXYKINASE [GTP]-RELATED"/>
    <property type="match status" value="1"/>
</dbReference>
<dbReference type="Pfam" id="PF00821">
    <property type="entry name" value="PEPCK_GTP"/>
    <property type="match status" value="1"/>
</dbReference>
<dbReference type="Pfam" id="PF17297">
    <property type="entry name" value="PEPCK_N"/>
    <property type="match status" value="1"/>
</dbReference>
<dbReference type="PIRSF" id="PIRSF001348">
    <property type="entry name" value="PEP_carboxykinase_GTP"/>
    <property type="match status" value="1"/>
</dbReference>
<dbReference type="SUPFAM" id="SSF68923">
    <property type="entry name" value="PEP carboxykinase N-terminal domain"/>
    <property type="match status" value="1"/>
</dbReference>
<dbReference type="SUPFAM" id="SSF53795">
    <property type="entry name" value="PEP carboxykinase-like"/>
    <property type="match status" value="1"/>
</dbReference>
<dbReference type="PROSITE" id="PS00505">
    <property type="entry name" value="PEPCK_GTP"/>
    <property type="match status" value="1"/>
</dbReference>